<gene>
    <name evidence="1" type="primary">ccmE</name>
    <name evidence="1" type="synonym">cycJ</name>
    <name type="ordered locus">BruAb1_0627</name>
</gene>
<proteinExistence type="inferred from homology"/>
<protein>
    <recommendedName>
        <fullName evidence="1">Cytochrome c-type biogenesis protein CcmE</fullName>
    </recommendedName>
    <alternativeName>
        <fullName evidence="1">Cytochrome c maturation protein E</fullName>
    </alternativeName>
    <alternativeName>
        <fullName evidence="1">Heme chaperone CcmE</fullName>
    </alternativeName>
</protein>
<organism>
    <name type="scientific">Brucella abortus biovar 1 (strain 9-941)</name>
    <dbReference type="NCBI Taxonomy" id="262698"/>
    <lineage>
        <taxon>Bacteria</taxon>
        <taxon>Pseudomonadati</taxon>
        <taxon>Pseudomonadota</taxon>
        <taxon>Alphaproteobacteria</taxon>
        <taxon>Hyphomicrobiales</taxon>
        <taxon>Brucellaceae</taxon>
        <taxon>Brucella/Ochrobactrum group</taxon>
        <taxon>Brucella</taxon>
    </lineage>
</organism>
<keyword id="KW-0997">Cell inner membrane</keyword>
<keyword id="KW-1003">Cell membrane</keyword>
<keyword id="KW-0201">Cytochrome c-type biogenesis</keyword>
<keyword id="KW-0349">Heme</keyword>
<keyword id="KW-0408">Iron</keyword>
<keyword id="KW-0472">Membrane</keyword>
<keyword id="KW-0479">Metal-binding</keyword>
<keyword id="KW-0735">Signal-anchor</keyword>
<keyword id="KW-0812">Transmembrane</keyword>
<keyword id="KW-1133">Transmembrane helix</keyword>
<name>CCME_BRUAB</name>
<accession>Q57ED2</accession>
<evidence type="ECO:0000255" key="1">
    <source>
        <dbReference type="HAMAP-Rule" id="MF_01959"/>
    </source>
</evidence>
<dbReference type="EMBL" id="AE017223">
    <property type="protein sequence ID" value="AAX74002.1"/>
    <property type="molecule type" value="Genomic_DNA"/>
</dbReference>
<dbReference type="RefSeq" id="WP_002963757.1">
    <property type="nucleotide sequence ID" value="NC_006932.1"/>
</dbReference>
<dbReference type="SMR" id="Q57ED2"/>
<dbReference type="EnsemblBacteria" id="AAX74002">
    <property type="protein sequence ID" value="AAX74002"/>
    <property type="gene ID" value="BruAb1_0627"/>
</dbReference>
<dbReference type="GeneID" id="97534052"/>
<dbReference type="KEGG" id="bmb:BruAb1_0627"/>
<dbReference type="HOGENOM" id="CLU_079503_1_1_5"/>
<dbReference type="Proteomes" id="UP000000540">
    <property type="component" value="Chromosome I"/>
</dbReference>
<dbReference type="GO" id="GO:0005886">
    <property type="term" value="C:plasma membrane"/>
    <property type="evidence" value="ECO:0007669"/>
    <property type="project" value="UniProtKB-SubCell"/>
</dbReference>
<dbReference type="GO" id="GO:0020037">
    <property type="term" value="F:heme binding"/>
    <property type="evidence" value="ECO:0007669"/>
    <property type="project" value="InterPro"/>
</dbReference>
<dbReference type="GO" id="GO:0046872">
    <property type="term" value="F:metal ion binding"/>
    <property type="evidence" value="ECO:0007669"/>
    <property type="project" value="UniProtKB-KW"/>
</dbReference>
<dbReference type="GO" id="GO:0017004">
    <property type="term" value="P:cytochrome complex assembly"/>
    <property type="evidence" value="ECO:0007669"/>
    <property type="project" value="UniProtKB-KW"/>
</dbReference>
<dbReference type="Gene3D" id="2.40.50.140">
    <property type="entry name" value="Nucleic acid-binding proteins"/>
    <property type="match status" value="1"/>
</dbReference>
<dbReference type="HAMAP" id="MF_01959">
    <property type="entry name" value="CcmE"/>
    <property type="match status" value="1"/>
</dbReference>
<dbReference type="InterPro" id="IPR004329">
    <property type="entry name" value="CcmE"/>
</dbReference>
<dbReference type="InterPro" id="IPR036127">
    <property type="entry name" value="CcmE-like_sf"/>
</dbReference>
<dbReference type="InterPro" id="IPR012340">
    <property type="entry name" value="NA-bd_OB-fold"/>
</dbReference>
<dbReference type="NCBIfam" id="NF009727">
    <property type="entry name" value="PRK13254.1-1"/>
    <property type="match status" value="1"/>
</dbReference>
<dbReference type="NCBIfam" id="NF009730">
    <property type="entry name" value="PRK13254.1-4"/>
    <property type="match status" value="1"/>
</dbReference>
<dbReference type="NCBIfam" id="NF009731">
    <property type="entry name" value="PRK13254.1-5"/>
    <property type="match status" value="1"/>
</dbReference>
<dbReference type="PANTHER" id="PTHR34128">
    <property type="entry name" value="CYTOCHROME C-TYPE BIOGENESIS PROTEIN CCME HOMOLOG, MITOCHONDRIAL"/>
    <property type="match status" value="1"/>
</dbReference>
<dbReference type="PANTHER" id="PTHR34128:SF2">
    <property type="entry name" value="CYTOCHROME C-TYPE BIOGENESIS PROTEIN CCME HOMOLOG, MITOCHONDRIAL"/>
    <property type="match status" value="1"/>
</dbReference>
<dbReference type="Pfam" id="PF03100">
    <property type="entry name" value="CcmE"/>
    <property type="match status" value="1"/>
</dbReference>
<dbReference type="SUPFAM" id="SSF82093">
    <property type="entry name" value="Heme chaperone CcmE"/>
    <property type="match status" value="1"/>
</dbReference>
<sequence>MSATAEQNARNPKGKGGFARTVSQRKRKRLFLIGGALAVLAVAVGLMLTAFNQDIRFFRTPADLTEQDMTSGARFRLGGLVEEGSVSRTGSELRFTVTDTIKTVKVVFEGIPPDLFREGQGVVAEGRFGSDGLFRADNVLAKHDENYVPKDLADSLKKKGVWEGK</sequence>
<feature type="chain" id="PRO_0000238798" description="Cytochrome c-type biogenesis protein CcmE">
    <location>
        <begin position="1"/>
        <end position="165"/>
    </location>
</feature>
<feature type="topological domain" description="Cytoplasmic" evidence="1">
    <location>
        <begin position="1"/>
        <end position="29"/>
    </location>
</feature>
<feature type="transmembrane region" description="Helical; Signal-anchor for type II membrane protein" evidence="1">
    <location>
        <begin position="30"/>
        <end position="50"/>
    </location>
</feature>
<feature type="topological domain" description="Periplasmic" evidence="1">
    <location>
        <begin position="51"/>
        <end position="165"/>
    </location>
</feature>
<feature type="binding site" description="covalent" evidence="1">
    <location>
        <position position="143"/>
    </location>
    <ligand>
        <name>heme</name>
        <dbReference type="ChEBI" id="CHEBI:30413"/>
    </ligand>
</feature>
<feature type="binding site" description="axial binding residue" evidence="1">
    <location>
        <position position="147"/>
    </location>
    <ligand>
        <name>heme</name>
        <dbReference type="ChEBI" id="CHEBI:30413"/>
    </ligand>
    <ligandPart>
        <name>Fe</name>
        <dbReference type="ChEBI" id="CHEBI:18248"/>
    </ligandPart>
</feature>
<comment type="function">
    <text evidence="1">Heme chaperone required for the biogenesis of c-type cytochromes. Transiently binds heme delivered by CcmC and transfers the heme to apo-cytochromes in a process facilitated by CcmF and CcmH.</text>
</comment>
<comment type="subcellular location">
    <subcellularLocation>
        <location evidence="1">Cell inner membrane</location>
        <topology evidence="1">Single-pass type II membrane protein</topology>
        <orientation evidence="1">Periplasmic side</orientation>
    </subcellularLocation>
</comment>
<comment type="similarity">
    <text evidence="1">Belongs to the CcmE/CycJ family.</text>
</comment>
<reference key="1">
    <citation type="journal article" date="2005" name="J. Bacteriol.">
        <title>Completion of the genome sequence of Brucella abortus and comparison to the highly similar genomes of Brucella melitensis and Brucella suis.</title>
        <authorList>
            <person name="Halling S.M."/>
            <person name="Peterson-Burch B.D."/>
            <person name="Bricker B.J."/>
            <person name="Zuerner R.L."/>
            <person name="Qing Z."/>
            <person name="Li L.-L."/>
            <person name="Kapur V."/>
            <person name="Alt D.P."/>
            <person name="Olsen S.C."/>
        </authorList>
    </citation>
    <scope>NUCLEOTIDE SEQUENCE [LARGE SCALE GENOMIC DNA]</scope>
    <source>
        <strain>9-941</strain>
    </source>
</reference>